<sequence length="238" mass="25200">MVPFLVLAQQCAPTVAPQTMAAIVQVESGFNPYAIGVVGGRLVRQPVSLDEAITTAQSLEAKGWNFSLGIAQVNRYNLPKYGSTYAQAFDPCKNLKMGSKILEDCYRRAIVKMPGQEQGALRAAFSCYYAGNFTGGFKTKPGSPSYVQKVVASADVTTKPIAVVPMIRKTPDAAAAVAAPVKKRQPADRNSVLVDLHPSSQSMPATGAANAPVRLKTEQPATTDAPPGKDNTDGVVVF</sequence>
<organism>
    <name type="scientific">Brucella suis biovar 1 (strain 1330)</name>
    <dbReference type="NCBI Taxonomy" id="204722"/>
    <lineage>
        <taxon>Bacteria</taxon>
        <taxon>Pseudomonadati</taxon>
        <taxon>Pseudomonadota</taxon>
        <taxon>Alphaproteobacteria</taxon>
        <taxon>Hyphomicrobiales</taxon>
        <taxon>Brucellaceae</taxon>
        <taxon>Brucella/Ochrobactrum group</taxon>
        <taxon>Brucella</taxon>
    </lineage>
</organism>
<comment type="function">
    <text evidence="2">The VirB system could be required for the establishment of the replication niche in the host.</text>
</comment>
<comment type="induction">
    <text>Specifically induced within macrophages by phagosome acidification. Induced at 37 degrees Celsius in minimal medium, suggesting that nutritional stress is a regulating signal.</text>
</comment>
<comment type="miscellaneous">
    <text>Transcription of the operon is maximal in early exponential phase.</text>
</comment>
<comment type="similarity">
    <text evidence="3">Belongs to the virb1 family.</text>
</comment>
<accession>Q9RPY4</accession>
<accession>G0KER7</accession>
<accession>Q7CEF9</accession>
<protein>
    <recommendedName>
        <fullName>Type IV secretion system protein virB1</fullName>
    </recommendedName>
</protein>
<reference key="1">
    <citation type="journal article" date="1999" name="Mol. Microbiol.">
        <title>A homologue of the Agrobacterium tumefaciens VirB and Bordetella pertussis Ptl type IV secretion systems is essential for intracellular survival of Brucella suis.</title>
        <authorList>
            <person name="O'Callaghan D."/>
            <person name="Cazevieille C."/>
            <person name="Allardet-Servent A."/>
            <person name="Boschiroli M.L."/>
            <person name="Bourg G."/>
            <person name="Foulongne V."/>
            <person name="Frutos P."/>
            <person name="Kulakov Y."/>
            <person name="Ramuz M."/>
        </authorList>
    </citation>
    <scope>NUCLEOTIDE SEQUENCE [GENOMIC DNA]</scope>
    <scope>FUNCTION</scope>
    <source>
        <strain>1330</strain>
    </source>
</reference>
<reference key="2">
    <citation type="journal article" date="2002" name="Proc. Natl. Acad. Sci. U.S.A.">
        <title>The Brucella suis virB operon is induced intracellularly in macrophages.</title>
        <authorList>
            <person name="Boschiroli M.L."/>
            <person name="Ouahrani-Bettache S."/>
            <person name="Foulongne V."/>
            <person name="Michaux-Charachon S."/>
            <person name="Bourg G."/>
            <person name="Allardet-Servent A."/>
            <person name="Cazevieille C."/>
            <person name="Liautard J.P."/>
            <person name="Ramuz M."/>
            <person name="O'Callaghan D."/>
        </authorList>
    </citation>
    <scope>NUCLEOTIDE SEQUENCE [GENOMIC DNA]</scope>
    <scope>EXPRESSION CONDITIONS</scope>
    <source>
        <strain>1330</strain>
    </source>
</reference>
<reference key="3">
    <citation type="journal article" date="2002" name="Proc. Natl. Acad. Sci. U.S.A.">
        <title>The Brucella suis genome reveals fundamental similarities between animal and plant pathogens and symbionts.</title>
        <authorList>
            <person name="Paulsen I.T."/>
            <person name="Seshadri R."/>
            <person name="Nelson K.E."/>
            <person name="Eisen J.A."/>
            <person name="Heidelberg J.F."/>
            <person name="Read T.D."/>
            <person name="Dodson R.J."/>
            <person name="Umayam L.A."/>
            <person name="Brinkac L.M."/>
            <person name="Beanan M.J."/>
            <person name="Daugherty S.C."/>
            <person name="DeBoy R.T."/>
            <person name="Durkin A.S."/>
            <person name="Kolonay J.F."/>
            <person name="Madupu R."/>
            <person name="Nelson W.C."/>
            <person name="Ayodeji B."/>
            <person name="Kraul M."/>
            <person name="Shetty J."/>
            <person name="Malek J.A."/>
            <person name="Van Aken S.E."/>
            <person name="Riedmuller S."/>
            <person name="Tettelin H."/>
            <person name="Gill S.R."/>
            <person name="White O."/>
            <person name="Salzberg S.L."/>
            <person name="Hoover D.L."/>
            <person name="Lindler L.E."/>
            <person name="Halling S.M."/>
            <person name="Boyle S.M."/>
            <person name="Fraser C.M."/>
        </authorList>
    </citation>
    <scope>NUCLEOTIDE SEQUENCE [LARGE SCALE GENOMIC DNA]</scope>
    <source>
        <strain>1330</strain>
    </source>
</reference>
<reference key="4">
    <citation type="journal article" date="2011" name="J. Bacteriol.">
        <title>Revised genome sequence of Brucella suis 1330.</title>
        <authorList>
            <person name="Tae H."/>
            <person name="Shallom S."/>
            <person name="Settlage R."/>
            <person name="Preston D."/>
            <person name="Adams L.G."/>
            <person name="Garner H.R."/>
        </authorList>
    </citation>
    <scope>NUCLEOTIDE SEQUENCE [LARGE SCALE GENOMIC DNA]</scope>
    <source>
        <strain>1330</strain>
    </source>
</reference>
<keyword id="KW-0843">Virulence</keyword>
<name>VIRB1_BRUSU</name>
<feature type="chain" id="PRO_0000289554" description="Type IV secretion system protein virB1">
    <location>
        <begin position="1"/>
        <end position="238"/>
    </location>
</feature>
<feature type="region of interest" description="Disordered" evidence="1">
    <location>
        <begin position="197"/>
        <end position="238"/>
    </location>
</feature>
<evidence type="ECO:0000256" key="1">
    <source>
        <dbReference type="SAM" id="MobiDB-lite"/>
    </source>
</evidence>
<evidence type="ECO:0000269" key="2">
    <source>
    </source>
</evidence>
<evidence type="ECO:0000305" key="3"/>
<proteinExistence type="evidence at transcript level"/>
<gene>
    <name type="primary">virB1</name>
    <name type="ordered locus">BRA0069</name>
    <name type="ordered locus">BS1330_II0069</name>
</gene>
<dbReference type="EMBL" id="AF141604">
    <property type="protein sequence ID" value="AAD56611.1"/>
    <property type="molecule type" value="Genomic_DNA"/>
</dbReference>
<dbReference type="EMBL" id="AE014292">
    <property type="protein sequence ID" value="AAN33281.1"/>
    <property type="molecule type" value="Genomic_DNA"/>
</dbReference>
<dbReference type="EMBL" id="CP002998">
    <property type="protein sequence ID" value="AEM19561.1"/>
    <property type="molecule type" value="Genomic_DNA"/>
</dbReference>
<dbReference type="RefSeq" id="WP_004687568.1">
    <property type="nucleotide sequence ID" value="NZ_KN046805.1"/>
</dbReference>
<dbReference type="CAZy" id="GH23">
    <property type="family name" value="Glycoside Hydrolase Family 23"/>
</dbReference>
<dbReference type="KEGG" id="bms:BRA0069"/>
<dbReference type="KEGG" id="bsi:BS1330_II0069"/>
<dbReference type="PATRIC" id="fig|204722.21.peg.2301"/>
<dbReference type="HOGENOM" id="CLU_076837_0_0_5"/>
<dbReference type="PRO" id="PR:Q9RPY4"/>
<dbReference type="Proteomes" id="UP000007104">
    <property type="component" value="Chromosome II"/>
</dbReference>
<dbReference type="CDD" id="cd16892">
    <property type="entry name" value="LT_VirB1-like"/>
    <property type="match status" value="1"/>
</dbReference>
<dbReference type="Gene3D" id="1.10.530.10">
    <property type="match status" value="1"/>
</dbReference>
<dbReference type="InterPro" id="IPR023346">
    <property type="entry name" value="Lysozyme-like_dom_sf"/>
</dbReference>
<dbReference type="InterPro" id="IPR008258">
    <property type="entry name" value="Transglycosylase_SLT_dom_1"/>
</dbReference>
<dbReference type="Pfam" id="PF01464">
    <property type="entry name" value="SLT"/>
    <property type="match status" value="1"/>
</dbReference>
<dbReference type="SUPFAM" id="SSF53955">
    <property type="entry name" value="Lysozyme-like"/>
    <property type="match status" value="1"/>
</dbReference>